<accession>Q7MYM5</accession>
<sequence length="459" mass="52638">MTLTQFGGLFVVYLISLVFILTLTYQEFRRVRFNFNIFFSLLYLLTFYFGFPLTCLLVFQFDVEVVPVDALLHALLASTCFYGIYYVSYKTRLRKPSMQPKAPVFTMNRVETNFTWLLLASVAVVTVGLFFMQNGFLLFKLQSYSQIFSSQVSGVALKRFFYFFIPAMLVVYFLKPTQLRWLFFLISTVAFGILTYVVVGGTRANIIIAFALFLFIGIVRGWITLWMLVTAGAIGIVGMFWLALKRYSLDVSGAEAFYTFLYLTRDTFSPWENFALLLNNYDKIDFQGLAPIIRDFYVFIPSWLWPGRPDAVLNSANYFTWEVLDNHSGLAISPTLIGSLVVMGGVLFIPVGAIVVGLIIKWFDWIYELGKQETNRYKAAILQAFCFGAIFNMIVLAREGVDSFVSRVVFFCIIFGLCLVIAKLLYWLFESAGLIRMYLTGNRVVSQKCPLQCEERKWS</sequence>
<protein>
    <recommendedName>
        <fullName evidence="1">Probable ECA polymerase</fullName>
    </recommendedName>
</protein>
<reference key="1">
    <citation type="journal article" date="2003" name="Nat. Biotechnol.">
        <title>The genome sequence of the entomopathogenic bacterium Photorhabdus luminescens.</title>
        <authorList>
            <person name="Duchaud E."/>
            <person name="Rusniok C."/>
            <person name="Frangeul L."/>
            <person name="Buchrieser C."/>
            <person name="Givaudan A."/>
            <person name="Taourit S."/>
            <person name="Bocs S."/>
            <person name="Boursaux-Eude C."/>
            <person name="Chandler M."/>
            <person name="Charles J.-F."/>
            <person name="Dassa E."/>
            <person name="Derose R."/>
            <person name="Derzelle S."/>
            <person name="Freyssinet G."/>
            <person name="Gaudriault S."/>
            <person name="Medigue C."/>
            <person name="Lanois A."/>
            <person name="Powell K."/>
            <person name="Siguier P."/>
            <person name="Vincent R."/>
            <person name="Wingate V."/>
            <person name="Zouine M."/>
            <person name="Glaser P."/>
            <person name="Boemare N."/>
            <person name="Danchin A."/>
            <person name="Kunst F."/>
        </authorList>
    </citation>
    <scope>NUCLEOTIDE SEQUENCE [LARGE SCALE GENOMIC DNA]</scope>
    <source>
        <strain>DSM 15139 / CIP 105565 / TT01</strain>
    </source>
</reference>
<name>WZYE_PHOLL</name>
<feature type="chain" id="PRO_0000208540" description="Probable ECA polymerase">
    <location>
        <begin position="1"/>
        <end position="459"/>
    </location>
</feature>
<feature type="transmembrane region" description="Helical" evidence="1">
    <location>
        <begin position="3"/>
        <end position="23"/>
    </location>
</feature>
<feature type="transmembrane region" description="Helical" evidence="1">
    <location>
        <begin position="37"/>
        <end position="57"/>
    </location>
</feature>
<feature type="transmembrane region" description="Helical" evidence="1">
    <location>
        <begin position="65"/>
        <end position="85"/>
    </location>
</feature>
<feature type="transmembrane region" description="Helical" evidence="1">
    <location>
        <begin position="119"/>
        <end position="139"/>
    </location>
</feature>
<feature type="transmembrane region" description="Helical" evidence="1">
    <location>
        <begin position="154"/>
        <end position="174"/>
    </location>
</feature>
<feature type="transmembrane region" description="Helical" evidence="1">
    <location>
        <begin position="181"/>
        <end position="201"/>
    </location>
</feature>
<feature type="transmembrane region" description="Helical" evidence="1">
    <location>
        <begin position="206"/>
        <end position="226"/>
    </location>
</feature>
<feature type="transmembrane region" description="Helical" evidence="1">
    <location>
        <begin position="227"/>
        <end position="247"/>
    </location>
</feature>
<feature type="transmembrane region" description="Helical" evidence="1">
    <location>
        <begin position="340"/>
        <end position="360"/>
    </location>
</feature>
<feature type="transmembrane region" description="Helical" evidence="1">
    <location>
        <begin position="377"/>
        <end position="397"/>
    </location>
</feature>
<feature type="transmembrane region" description="Helical" evidence="1">
    <location>
        <begin position="409"/>
        <end position="429"/>
    </location>
</feature>
<gene>
    <name evidence="1" type="primary">wzyE</name>
    <name type="ordered locus">plu4652</name>
</gene>
<comment type="function">
    <text evidence="1">Probably involved in the polymerization of enterobacterial common antigen (ECA) trisaccharide repeat units.</text>
</comment>
<comment type="pathway">
    <text evidence="1">Bacterial outer membrane biogenesis; enterobacterial common antigen biosynthesis.</text>
</comment>
<comment type="subunit">
    <text evidence="1">Probably part of a complex composed of WzxE, WzyE and WzzE.</text>
</comment>
<comment type="subcellular location">
    <subcellularLocation>
        <location evidence="1">Cell inner membrane</location>
        <topology evidence="1">Multi-pass membrane protein</topology>
    </subcellularLocation>
</comment>
<comment type="similarity">
    <text evidence="1">Belongs to the WzyE family.</text>
</comment>
<organism>
    <name type="scientific">Photorhabdus laumondii subsp. laumondii (strain DSM 15139 / CIP 105565 / TT01)</name>
    <name type="common">Photorhabdus luminescens subsp. laumondii</name>
    <dbReference type="NCBI Taxonomy" id="243265"/>
    <lineage>
        <taxon>Bacteria</taxon>
        <taxon>Pseudomonadati</taxon>
        <taxon>Pseudomonadota</taxon>
        <taxon>Gammaproteobacteria</taxon>
        <taxon>Enterobacterales</taxon>
        <taxon>Morganellaceae</taxon>
        <taxon>Photorhabdus</taxon>
    </lineage>
</organism>
<dbReference type="EMBL" id="BX571874">
    <property type="protein sequence ID" value="CAE17024.1"/>
    <property type="molecule type" value="Genomic_DNA"/>
</dbReference>
<dbReference type="RefSeq" id="WP_011148722.1">
    <property type="nucleotide sequence ID" value="NC_005126.1"/>
</dbReference>
<dbReference type="STRING" id="243265.plu4652"/>
<dbReference type="GeneID" id="48850869"/>
<dbReference type="KEGG" id="plu:plu4652"/>
<dbReference type="eggNOG" id="ENOG502Z7MA">
    <property type="taxonomic scope" value="Bacteria"/>
</dbReference>
<dbReference type="HOGENOM" id="CLU_049711_0_0_6"/>
<dbReference type="OrthoDB" id="6415259at2"/>
<dbReference type="UniPathway" id="UPA00566"/>
<dbReference type="Proteomes" id="UP000002514">
    <property type="component" value="Chromosome"/>
</dbReference>
<dbReference type="GO" id="GO:0005886">
    <property type="term" value="C:plasma membrane"/>
    <property type="evidence" value="ECO:0007669"/>
    <property type="project" value="UniProtKB-SubCell"/>
</dbReference>
<dbReference type="GO" id="GO:0009246">
    <property type="term" value="P:enterobacterial common antigen biosynthetic process"/>
    <property type="evidence" value="ECO:0007669"/>
    <property type="project" value="UniProtKB-UniRule"/>
</dbReference>
<dbReference type="HAMAP" id="MF_01003">
    <property type="entry name" value="WzyE"/>
    <property type="match status" value="1"/>
</dbReference>
<dbReference type="InterPro" id="IPR010691">
    <property type="entry name" value="WzyE"/>
</dbReference>
<dbReference type="NCBIfam" id="NF002820">
    <property type="entry name" value="PRK02975.1"/>
    <property type="match status" value="1"/>
</dbReference>
<dbReference type="Pfam" id="PF06899">
    <property type="entry name" value="WzyE"/>
    <property type="match status" value="1"/>
</dbReference>
<evidence type="ECO:0000255" key="1">
    <source>
        <dbReference type="HAMAP-Rule" id="MF_01003"/>
    </source>
</evidence>
<proteinExistence type="inferred from homology"/>
<keyword id="KW-0997">Cell inner membrane</keyword>
<keyword id="KW-1003">Cell membrane</keyword>
<keyword id="KW-0472">Membrane</keyword>
<keyword id="KW-1185">Reference proteome</keyword>
<keyword id="KW-0812">Transmembrane</keyword>
<keyword id="KW-1133">Transmembrane helix</keyword>